<dbReference type="EMBL" id="CU329671">
    <property type="protein sequence ID" value="CAA18422.2"/>
    <property type="molecule type" value="Genomic_DNA"/>
</dbReference>
<dbReference type="PIR" id="T39432">
    <property type="entry name" value="T39432"/>
</dbReference>
<dbReference type="SMR" id="O60086"/>
<dbReference type="FunCoup" id="O60086">
    <property type="interactions" value="122"/>
</dbReference>
<dbReference type="STRING" id="284812.O60086"/>
<dbReference type="iPTMnet" id="O60086"/>
<dbReference type="PaxDb" id="4896-SPBC14C8.04.1"/>
<dbReference type="EnsemblFungi" id="SPBC14C8.04.1">
    <property type="protein sequence ID" value="SPBC14C8.04.1:pep"/>
    <property type="gene ID" value="SPBC14C8.04"/>
</dbReference>
<dbReference type="KEGG" id="spo:2540022"/>
<dbReference type="PomBase" id="SPBC14C8.04"/>
<dbReference type="VEuPathDB" id="FungiDB:SPBC14C8.04"/>
<dbReference type="eggNOG" id="KOG2663">
    <property type="taxonomic scope" value="Eukaryota"/>
</dbReference>
<dbReference type="HOGENOM" id="CLU_055003_0_0_1"/>
<dbReference type="InParanoid" id="O60086"/>
<dbReference type="OMA" id="CARSGMM"/>
<dbReference type="PhylomeDB" id="O60086"/>
<dbReference type="UniPathway" id="UPA00047">
    <property type="reaction ID" value="UER00055"/>
</dbReference>
<dbReference type="UniPathway" id="UPA00049">
    <property type="reaction ID" value="UER00059"/>
</dbReference>
<dbReference type="PRO" id="PR:O60086"/>
<dbReference type="Proteomes" id="UP000002485">
    <property type="component" value="Chromosome II"/>
</dbReference>
<dbReference type="GO" id="GO:0005948">
    <property type="term" value="C:acetolactate synthase complex"/>
    <property type="evidence" value="ECO:0000318"/>
    <property type="project" value="GO_Central"/>
</dbReference>
<dbReference type="GO" id="GO:0005737">
    <property type="term" value="C:cytoplasm"/>
    <property type="evidence" value="ECO:0007005"/>
    <property type="project" value="PomBase"/>
</dbReference>
<dbReference type="GO" id="GO:0042645">
    <property type="term" value="C:mitochondrial nucleoid"/>
    <property type="evidence" value="ECO:0000318"/>
    <property type="project" value="GO_Central"/>
</dbReference>
<dbReference type="GO" id="GO:1990610">
    <property type="term" value="F:acetolactate synthase regulator activity"/>
    <property type="evidence" value="ECO:0000250"/>
    <property type="project" value="PomBase"/>
</dbReference>
<dbReference type="GO" id="GO:0030234">
    <property type="term" value="F:enzyme regulator activity"/>
    <property type="evidence" value="ECO:0000318"/>
    <property type="project" value="GO_Central"/>
</dbReference>
<dbReference type="GO" id="GO:0009082">
    <property type="term" value="P:branched-chain amino acid biosynthetic process"/>
    <property type="evidence" value="ECO:0000318"/>
    <property type="project" value="GO_Central"/>
</dbReference>
<dbReference type="GO" id="GO:0009097">
    <property type="term" value="P:isoleucine biosynthetic process"/>
    <property type="evidence" value="ECO:0007669"/>
    <property type="project" value="UniProtKB-UniPathway"/>
</dbReference>
<dbReference type="GO" id="GO:0009099">
    <property type="term" value="P:L-valine biosynthetic process"/>
    <property type="evidence" value="ECO:0007669"/>
    <property type="project" value="UniProtKB-UniPathway"/>
</dbReference>
<dbReference type="CDD" id="cd04878">
    <property type="entry name" value="ACT_AHAS"/>
    <property type="match status" value="1"/>
</dbReference>
<dbReference type="FunFam" id="3.30.70.260:FF:000001">
    <property type="entry name" value="Acetolactate synthase, small subunit"/>
    <property type="match status" value="1"/>
</dbReference>
<dbReference type="Gene3D" id="3.30.70.260">
    <property type="match status" value="1"/>
</dbReference>
<dbReference type="Gene3D" id="3.30.70.1150">
    <property type="entry name" value="ACT-like. Chain A, domain 2"/>
    <property type="match status" value="1"/>
</dbReference>
<dbReference type="InterPro" id="IPR004789">
    <property type="entry name" value="Acetalactate_synth_ssu"/>
</dbReference>
<dbReference type="InterPro" id="IPR027271">
    <property type="entry name" value="Acetolactate_synth/TF_NikR_C"/>
</dbReference>
<dbReference type="InterPro" id="IPR019455">
    <property type="entry name" value="Acetolactate_synth_ssu_C"/>
</dbReference>
<dbReference type="InterPro" id="IPR045865">
    <property type="entry name" value="ACT-like_dom_sf"/>
</dbReference>
<dbReference type="InterPro" id="IPR002912">
    <property type="entry name" value="ACT_dom"/>
</dbReference>
<dbReference type="InterPro" id="IPR039557">
    <property type="entry name" value="AHAS_ACT"/>
</dbReference>
<dbReference type="InterPro" id="IPR054480">
    <property type="entry name" value="AHAS_small-like_ACT"/>
</dbReference>
<dbReference type="InterPro" id="IPR053050">
    <property type="entry name" value="ALS_regulatory_subunit"/>
</dbReference>
<dbReference type="NCBIfam" id="TIGR00119">
    <property type="entry name" value="acolac_sm"/>
    <property type="match status" value="1"/>
</dbReference>
<dbReference type="PANTHER" id="PTHR31242">
    <property type="entry name" value="ACETOLACTATE SYNTHASE SMALL SUBUNIT, MITOCHONDRIAL"/>
    <property type="match status" value="1"/>
</dbReference>
<dbReference type="PANTHER" id="PTHR31242:SF2">
    <property type="entry name" value="ACETOLACTATE SYNTHASE SMALL SUBUNIT, MITOCHONDRIAL"/>
    <property type="match status" value="1"/>
</dbReference>
<dbReference type="Pfam" id="PF22629">
    <property type="entry name" value="ACT_AHAS_ss"/>
    <property type="match status" value="1"/>
</dbReference>
<dbReference type="Pfam" id="PF10369">
    <property type="entry name" value="ALS_ss_C"/>
    <property type="match status" value="1"/>
</dbReference>
<dbReference type="SUPFAM" id="SSF55021">
    <property type="entry name" value="ACT-like"/>
    <property type="match status" value="2"/>
</dbReference>
<dbReference type="PROSITE" id="PS51671">
    <property type="entry name" value="ACT"/>
    <property type="match status" value="1"/>
</dbReference>
<comment type="function">
    <text evidence="1">Stimulates activity of the acetolactate synthase catalytic subunit ilv1.</text>
</comment>
<comment type="pathway">
    <text>Amino-acid biosynthesis; L-isoleucine biosynthesis; L-isoleucine from 2-oxobutanoate: step 1/4.</text>
</comment>
<comment type="pathway">
    <text>Amino-acid biosynthesis; L-valine biosynthesis; L-valine from pyruvate: step 1/4.</text>
</comment>
<comment type="subcellular location">
    <subcellularLocation>
        <location evidence="3">Cytoplasm</location>
    </subcellularLocation>
</comment>
<comment type="similarity">
    <text evidence="5">Belongs to the acetolactate synthase small subunit family.</text>
</comment>
<reference key="1">
    <citation type="journal article" date="2002" name="Nature">
        <title>The genome sequence of Schizosaccharomyces pombe.</title>
        <authorList>
            <person name="Wood V."/>
            <person name="Gwilliam R."/>
            <person name="Rajandream M.A."/>
            <person name="Lyne M.H."/>
            <person name="Lyne R."/>
            <person name="Stewart A."/>
            <person name="Sgouros J.G."/>
            <person name="Peat N."/>
            <person name="Hayles J."/>
            <person name="Baker S.G."/>
            <person name="Basham D."/>
            <person name="Bowman S."/>
            <person name="Brooks K."/>
            <person name="Brown D."/>
            <person name="Brown S."/>
            <person name="Chillingworth T."/>
            <person name="Churcher C.M."/>
            <person name="Collins M."/>
            <person name="Connor R."/>
            <person name="Cronin A."/>
            <person name="Davis P."/>
            <person name="Feltwell T."/>
            <person name="Fraser A."/>
            <person name="Gentles S."/>
            <person name="Goble A."/>
            <person name="Hamlin N."/>
            <person name="Harris D.E."/>
            <person name="Hidalgo J."/>
            <person name="Hodgson G."/>
            <person name="Holroyd S."/>
            <person name="Hornsby T."/>
            <person name="Howarth S."/>
            <person name="Huckle E.J."/>
            <person name="Hunt S."/>
            <person name="Jagels K."/>
            <person name="James K.D."/>
            <person name="Jones L."/>
            <person name="Jones M."/>
            <person name="Leather S."/>
            <person name="McDonald S."/>
            <person name="McLean J."/>
            <person name="Mooney P."/>
            <person name="Moule S."/>
            <person name="Mungall K.L."/>
            <person name="Murphy L.D."/>
            <person name="Niblett D."/>
            <person name="Odell C."/>
            <person name="Oliver K."/>
            <person name="O'Neil S."/>
            <person name="Pearson D."/>
            <person name="Quail M.A."/>
            <person name="Rabbinowitsch E."/>
            <person name="Rutherford K.M."/>
            <person name="Rutter S."/>
            <person name="Saunders D."/>
            <person name="Seeger K."/>
            <person name="Sharp S."/>
            <person name="Skelton J."/>
            <person name="Simmonds M.N."/>
            <person name="Squares R."/>
            <person name="Squares S."/>
            <person name="Stevens K."/>
            <person name="Taylor K."/>
            <person name="Taylor R.G."/>
            <person name="Tivey A."/>
            <person name="Walsh S.V."/>
            <person name="Warren T."/>
            <person name="Whitehead S."/>
            <person name="Woodward J.R."/>
            <person name="Volckaert G."/>
            <person name="Aert R."/>
            <person name="Robben J."/>
            <person name="Grymonprez B."/>
            <person name="Weltjens I."/>
            <person name="Vanstreels E."/>
            <person name="Rieger M."/>
            <person name="Schaefer M."/>
            <person name="Mueller-Auer S."/>
            <person name="Gabel C."/>
            <person name="Fuchs M."/>
            <person name="Duesterhoeft A."/>
            <person name="Fritzc C."/>
            <person name="Holzer E."/>
            <person name="Moestl D."/>
            <person name="Hilbert H."/>
            <person name="Borzym K."/>
            <person name="Langer I."/>
            <person name="Beck A."/>
            <person name="Lehrach H."/>
            <person name="Reinhardt R."/>
            <person name="Pohl T.M."/>
            <person name="Eger P."/>
            <person name="Zimmermann W."/>
            <person name="Wedler H."/>
            <person name="Wambutt R."/>
            <person name="Purnelle B."/>
            <person name="Goffeau A."/>
            <person name="Cadieu E."/>
            <person name="Dreano S."/>
            <person name="Gloux S."/>
            <person name="Lelaure V."/>
            <person name="Mottier S."/>
            <person name="Galibert F."/>
            <person name="Aves S.J."/>
            <person name="Xiang Z."/>
            <person name="Hunt C."/>
            <person name="Moore K."/>
            <person name="Hurst S.M."/>
            <person name="Lucas M."/>
            <person name="Rochet M."/>
            <person name="Gaillardin C."/>
            <person name="Tallada V.A."/>
            <person name="Garzon A."/>
            <person name="Thode G."/>
            <person name="Daga R.R."/>
            <person name="Cruzado L."/>
            <person name="Jimenez J."/>
            <person name="Sanchez M."/>
            <person name="del Rey F."/>
            <person name="Benito J."/>
            <person name="Dominguez A."/>
            <person name="Revuelta J.L."/>
            <person name="Moreno S."/>
            <person name="Armstrong J."/>
            <person name="Forsburg S.L."/>
            <person name="Cerutti L."/>
            <person name="Lowe T."/>
            <person name="McCombie W.R."/>
            <person name="Paulsen I."/>
            <person name="Potashkin J."/>
            <person name="Shpakovski G.V."/>
            <person name="Ussery D."/>
            <person name="Barrell B.G."/>
            <person name="Nurse P."/>
        </authorList>
    </citation>
    <scope>NUCLEOTIDE SEQUENCE [LARGE SCALE GENOMIC DNA]</scope>
    <source>
        <strain>972 / ATCC 24843</strain>
    </source>
</reference>
<reference key="2">
    <citation type="journal article" date="2006" name="Nat. Biotechnol.">
        <title>ORFeome cloning and global analysis of protein localization in the fission yeast Schizosaccharomyces pombe.</title>
        <authorList>
            <person name="Matsuyama A."/>
            <person name="Arai R."/>
            <person name="Yashiroda Y."/>
            <person name="Shirai A."/>
            <person name="Kamata A."/>
            <person name="Sekido S."/>
            <person name="Kobayashi Y."/>
            <person name="Hashimoto A."/>
            <person name="Hamamoto M."/>
            <person name="Hiraoka Y."/>
            <person name="Horinouchi S."/>
            <person name="Yoshida M."/>
        </authorList>
    </citation>
    <scope>SUBCELLULAR LOCATION [LARGE SCALE ANALYSIS]</scope>
</reference>
<reference key="3">
    <citation type="journal article" date="2008" name="J. Proteome Res.">
        <title>Phosphoproteome analysis of fission yeast.</title>
        <authorList>
            <person name="Wilson-Grady J.T."/>
            <person name="Villen J."/>
            <person name="Gygi S.P."/>
        </authorList>
    </citation>
    <scope>PHOSPHORYLATION [LARGE SCALE ANALYSIS] AT SER-34</scope>
    <scope>IDENTIFICATION BY MASS SPECTROMETRY</scope>
</reference>
<keyword id="KW-0028">Amino-acid biosynthesis</keyword>
<keyword id="KW-0100">Branched-chain amino acid biosynthesis</keyword>
<keyword id="KW-0963">Cytoplasm</keyword>
<keyword id="KW-0597">Phosphoprotein</keyword>
<keyword id="KW-1185">Reference proteome</keyword>
<name>ILV6_SCHPO</name>
<gene>
    <name type="ORF">SPBC14C8.04</name>
</gene>
<proteinExistence type="evidence at protein level"/>
<sequence length="289" mass="31834">MFARRCGRLANRFVRLKSTSATSPITYKALHANSPLPRCRIIEPPRATVPEAVSNIIMSTPFNRVQRPKRHVFNCLVQNEPGVLSRLSGILAARGFNIDSLVVCATEVENLSRMTIVLRGADEVVEQAKRQIEDIVSVWAVLDYTGTSMVERELLLAKVSLLGPDHFQEHFERSEKVAESTNAKAKSDGEGVMNANAALQLRASQLAAINQLTTLFHGRVADISTETIILELTATPDRVDNFLSLLRPYGVLEACRTGTSAMTRAPHSNEVTEEAEDDVEVEEVFLPPG</sequence>
<accession>O60086</accession>
<feature type="chain" id="PRO_0000317338" description="Probable acetolactate synthase small subunit">
    <location>
        <begin position="1"/>
        <end position="289"/>
    </location>
</feature>
<feature type="domain" description="ACT" evidence="2">
    <location>
        <begin position="72"/>
        <end position="149"/>
    </location>
</feature>
<feature type="modified residue" description="Phosphoserine" evidence="4">
    <location>
        <position position="34"/>
    </location>
</feature>
<protein>
    <recommendedName>
        <fullName>Probable acetolactate synthase small subunit</fullName>
    </recommendedName>
    <alternativeName>
        <fullName>Acetohydroxy-acid synthase small subunit</fullName>
        <shortName>AHAS</shortName>
        <shortName>ALS</shortName>
    </alternativeName>
</protein>
<evidence type="ECO:0000250" key="1"/>
<evidence type="ECO:0000255" key="2">
    <source>
        <dbReference type="PROSITE-ProRule" id="PRU01007"/>
    </source>
</evidence>
<evidence type="ECO:0000269" key="3">
    <source>
    </source>
</evidence>
<evidence type="ECO:0000269" key="4">
    <source>
    </source>
</evidence>
<evidence type="ECO:0000305" key="5"/>
<organism>
    <name type="scientific">Schizosaccharomyces pombe (strain 972 / ATCC 24843)</name>
    <name type="common">Fission yeast</name>
    <dbReference type="NCBI Taxonomy" id="284812"/>
    <lineage>
        <taxon>Eukaryota</taxon>
        <taxon>Fungi</taxon>
        <taxon>Dikarya</taxon>
        <taxon>Ascomycota</taxon>
        <taxon>Taphrinomycotina</taxon>
        <taxon>Schizosaccharomycetes</taxon>
        <taxon>Schizosaccharomycetales</taxon>
        <taxon>Schizosaccharomycetaceae</taxon>
        <taxon>Schizosaccharomyces</taxon>
    </lineage>
</organism>